<gene>
    <name evidence="1" type="primary">nsrR</name>
    <name type="ordered locus">SCH_4243</name>
</gene>
<comment type="function">
    <text evidence="1">Nitric oxide-sensitive repressor of genes involved in protecting the cell against nitrosative stress. May require iron for activity.</text>
</comment>
<comment type="cofactor">
    <cofactor evidence="1">
        <name>[2Fe-2S] cluster</name>
        <dbReference type="ChEBI" id="CHEBI:190135"/>
    </cofactor>
    <text evidence="1">Binds 1 [2Fe-2S] cluster per subunit.</text>
</comment>
<comment type="sequence caution" evidence="2">
    <conflict type="erroneous initiation">
        <sequence resource="EMBL-CDS" id="AAX68149"/>
    </conflict>
</comment>
<feature type="chain" id="PRO_0000268944" description="HTH-type transcriptional repressor NsrR">
    <location>
        <begin position="1"/>
        <end position="141"/>
    </location>
</feature>
<feature type="domain" description="HTH rrf2-type" evidence="1">
    <location>
        <begin position="2"/>
        <end position="129"/>
    </location>
</feature>
<feature type="DNA-binding region" description="H-T-H motif" evidence="1">
    <location>
        <begin position="28"/>
        <end position="51"/>
    </location>
</feature>
<feature type="binding site" evidence="1">
    <location>
        <position position="91"/>
    </location>
    <ligand>
        <name>[2Fe-2S] cluster</name>
        <dbReference type="ChEBI" id="CHEBI:190135"/>
    </ligand>
</feature>
<feature type="binding site" evidence="1">
    <location>
        <position position="96"/>
    </location>
    <ligand>
        <name>[2Fe-2S] cluster</name>
        <dbReference type="ChEBI" id="CHEBI:190135"/>
    </ligand>
</feature>
<feature type="binding site" evidence="1">
    <location>
        <position position="102"/>
    </location>
    <ligand>
        <name>[2Fe-2S] cluster</name>
        <dbReference type="ChEBI" id="CHEBI:190135"/>
    </ligand>
</feature>
<keyword id="KW-0001">2Fe-2S</keyword>
<keyword id="KW-0238">DNA-binding</keyword>
<keyword id="KW-0408">Iron</keyword>
<keyword id="KW-0411">Iron-sulfur</keyword>
<keyword id="KW-0479">Metal-binding</keyword>
<keyword id="KW-0678">Repressor</keyword>
<keyword id="KW-0804">Transcription</keyword>
<keyword id="KW-0805">Transcription regulation</keyword>
<dbReference type="EMBL" id="AE017220">
    <property type="protein sequence ID" value="AAX68149.1"/>
    <property type="status" value="ALT_INIT"/>
    <property type="molecule type" value="Genomic_DNA"/>
</dbReference>
<dbReference type="RefSeq" id="WP_001177632.1">
    <property type="nucleotide sequence ID" value="NC_006905.1"/>
</dbReference>
<dbReference type="SMR" id="Q57GL3"/>
<dbReference type="KEGG" id="sec:SCH_4243"/>
<dbReference type="HOGENOM" id="CLU_107144_2_1_6"/>
<dbReference type="Proteomes" id="UP000000538">
    <property type="component" value="Chromosome"/>
</dbReference>
<dbReference type="GO" id="GO:0005829">
    <property type="term" value="C:cytosol"/>
    <property type="evidence" value="ECO:0007669"/>
    <property type="project" value="TreeGrafter"/>
</dbReference>
<dbReference type="GO" id="GO:0051537">
    <property type="term" value="F:2 iron, 2 sulfur cluster binding"/>
    <property type="evidence" value="ECO:0007669"/>
    <property type="project" value="UniProtKB-KW"/>
</dbReference>
<dbReference type="GO" id="GO:0003700">
    <property type="term" value="F:DNA-binding transcription factor activity"/>
    <property type="evidence" value="ECO:0007669"/>
    <property type="project" value="UniProtKB-UniRule"/>
</dbReference>
<dbReference type="GO" id="GO:0003690">
    <property type="term" value="F:double-stranded DNA binding"/>
    <property type="evidence" value="ECO:0007669"/>
    <property type="project" value="UniProtKB-UniRule"/>
</dbReference>
<dbReference type="GO" id="GO:0005506">
    <property type="term" value="F:iron ion binding"/>
    <property type="evidence" value="ECO:0007669"/>
    <property type="project" value="UniProtKB-UniRule"/>
</dbReference>
<dbReference type="GO" id="GO:0045892">
    <property type="term" value="P:negative regulation of DNA-templated transcription"/>
    <property type="evidence" value="ECO:0007669"/>
    <property type="project" value="InterPro"/>
</dbReference>
<dbReference type="FunFam" id="1.10.10.10:FF:000105">
    <property type="entry name" value="HTH-type transcriptional repressor NsrR"/>
    <property type="match status" value="1"/>
</dbReference>
<dbReference type="Gene3D" id="1.10.10.10">
    <property type="entry name" value="Winged helix-like DNA-binding domain superfamily/Winged helix DNA-binding domain"/>
    <property type="match status" value="1"/>
</dbReference>
<dbReference type="HAMAP" id="MF_01177">
    <property type="entry name" value="HTH_type_NsrR"/>
    <property type="match status" value="1"/>
</dbReference>
<dbReference type="InterPro" id="IPR000944">
    <property type="entry name" value="Tscrpt_reg_Rrf2"/>
</dbReference>
<dbReference type="InterPro" id="IPR023761">
    <property type="entry name" value="Tscrpt_rep_HTH_NsrR"/>
</dbReference>
<dbReference type="InterPro" id="IPR036388">
    <property type="entry name" value="WH-like_DNA-bd_sf"/>
</dbReference>
<dbReference type="InterPro" id="IPR036390">
    <property type="entry name" value="WH_DNA-bd_sf"/>
</dbReference>
<dbReference type="NCBIfam" id="NF008240">
    <property type="entry name" value="PRK11014.1"/>
    <property type="match status" value="1"/>
</dbReference>
<dbReference type="NCBIfam" id="TIGR00738">
    <property type="entry name" value="rrf2_super"/>
    <property type="match status" value="1"/>
</dbReference>
<dbReference type="PANTHER" id="PTHR33221:SF4">
    <property type="entry name" value="HTH-TYPE TRANSCRIPTIONAL REPRESSOR NSRR"/>
    <property type="match status" value="1"/>
</dbReference>
<dbReference type="PANTHER" id="PTHR33221">
    <property type="entry name" value="WINGED HELIX-TURN-HELIX TRANSCRIPTIONAL REGULATOR, RRF2 FAMILY"/>
    <property type="match status" value="1"/>
</dbReference>
<dbReference type="Pfam" id="PF02082">
    <property type="entry name" value="Rrf2"/>
    <property type="match status" value="1"/>
</dbReference>
<dbReference type="SUPFAM" id="SSF46785">
    <property type="entry name" value="Winged helix' DNA-binding domain"/>
    <property type="match status" value="1"/>
</dbReference>
<dbReference type="PROSITE" id="PS51197">
    <property type="entry name" value="HTH_RRF2_2"/>
    <property type="match status" value="1"/>
</dbReference>
<evidence type="ECO:0000255" key="1">
    <source>
        <dbReference type="HAMAP-Rule" id="MF_01177"/>
    </source>
</evidence>
<evidence type="ECO:0000305" key="2"/>
<proteinExistence type="inferred from homology"/>
<protein>
    <recommendedName>
        <fullName evidence="1">HTH-type transcriptional repressor NsrR</fullName>
    </recommendedName>
</protein>
<organism>
    <name type="scientific">Salmonella choleraesuis (strain SC-B67)</name>
    <dbReference type="NCBI Taxonomy" id="321314"/>
    <lineage>
        <taxon>Bacteria</taxon>
        <taxon>Pseudomonadati</taxon>
        <taxon>Pseudomonadota</taxon>
        <taxon>Gammaproteobacteria</taxon>
        <taxon>Enterobacterales</taxon>
        <taxon>Enterobacteriaceae</taxon>
        <taxon>Salmonella</taxon>
    </lineage>
</organism>
<accession>Q57GL3</accession>
<reference key="1">
    <citation type="journal article" date="2005" name="Nucleic Acids Res.">
        <title>The genome sequence of Salmonella enterica serovar Choleraesuis, a highly invasive and resistant zoonotic pathogen.</title>
        <authorList>
            <person name="Chiu C.-H."/>
            <person name="Tang P."/>
            <person name="Chu C."/>
            <person name="Hu S."/>
            <person name="Bao Q."/>
            <person name="Yu J."/>
            <person name="Chou Y.-Y."/>
            <person name="Wang H.-S."/>
            <person name="Lee Y.-S."/>
        </authorList>
    </citation>
    <scope>NUCLEOTIDE SEQUENCE [LARGE SCALE GENOMIC DNA]</scope>
    <source>
        <strain>SC-B67</strain>
    </source>
</reference>
<sequence>MQLTSFTDYGLRALIYMASLPDGRMTSISEVTEVYGVSRNHMVKIINQLSRAGFVTAVRGKNGGIRLGKPANTICIGDVVRELEPLSLVNCSSEFCHITPACRLKQALSKAVQSFLKELDNYTLADLVEENQPLYKLLLVE</sequence>
<name>NSRR_SALCH</name>